<reference key="1">
    <citation type="journal article" date="2000" name="Science">
        <title>The genome sequence of Drosophila melanogaster.</title>
        <authorList>
            <person name="Adams M.D."/>
            <person name="Celniker S.E."/>
            <person name="Holt R.A."/>
            <person name="Evans C.A."/>
            <person name="Gocayne J.D."/>
            <person name="Amanatides P.G."/>
            <person name="Scherer S.E."/>
            <person name="Li P.W."/>
            <person name="Hoskins R.A."/>
            <person name="Galle R.F."/>
            <person name="George R.A."/>
            <person name="Lewis S.E."/>
            <person name="Richards S."/>
            <person name="Ashburner M."/>
            <person name="Henderson S.N."/>
            <person name="Sutton G.G."/>
            <person name="Wortman J.R."/>
            <person name="Yandell M.D."/>
            <person name="Zhang Q."/>
            <person name="Chen L.X."/>
            <person name="Brandon R.C."/>
            <person name="Rogers Y.-H.C."/>
            <person name="Blazej R.G."/>
            <person name="Champe M."/>
            <person name="Pfeiffer B.D."/>
            <person name="Wan K.H."/>
            <person name="Doyle C."/>
            <person name="Baxter E.G."/>
            <person name="Helt G."/>
            <person name="Nelson C.R."/>
            <person name="Miklos G.L.G."/>
            <person name="Abril J.F."/>
            <person name="Agbayani A."/>
            <person name="An H.-J."/>
            <person name="Andrews-Pfannkoch C."/>
            <person name="Baldwin D."/>
            <person name="Ballew R.M."/>
            <person name="Basu A."/>
            <person name="Baxendale J."/>
            <person name="Bayraktaroglu L."/>
            <person name="Beasley E.M."/>
            <person name="Beeson K.Y."/>
            <person name="Benos P.V."/>
            <person name="Berman B.P."/>
            <person name="Bhandari D."/>
            <person name="Bolshakov S."/>
            <person name="Borkova D."/>
            <person name="Botchan M.R."/>
            <person name="Bouck J."/>
            <person name="Brokstein P."/>
            <person name="Brottier P."/>
            <person name="Burtis K.C."/>
            <person name="Busam D.A."/>
            <person name="Butler H."/>
            <person name="Cadieu E."/>
            <person name="Center A."/>
            <person name="Chandra I."/>
            <person name="Cherry J.M."/>
            <person name="Cawley S."/>
            <person name="Dahlke C."/>
            <person name="Davenport L.B."/>
            <person name="Davies P."/>
            <person name="de Pablos B."/>
            <person name="Delcher A."/>
            <person name="Deng Z."/>
            <person name="Mays A.D."/>
            <person name="Dew I."/>
            <person name="Dietz S.M."/>
            <person name="Dodson K."/>
            <person name="Doup L.E."/>
            <person name="Downes M."/>
            <person name="Dugan-Rocha S."/>
            <person name="Dunkov B.C."/>
            <person name="Dunn P."/>
            <person name="Durbin K.J."/>
            <person name="Evangelista C.C."/>
            <person name="Ferraz C."/>
            <person name="Ferriera S."/>
            <person name="Fleischmann W."/>
            <person name="Fosler C."/>
            <person name="Gabrielian A.E."/>
            <person name="Garg N.S."/>
            <person name="Gelbart W.M."/>
            <person name="Glasser K."/>
            <person name="Glodek A."/>
            <person name="Gong F."/>
            <person name="Gorrell J.H."/>
            <person name="Gu Z."/>
            <person name="Guan P."/>
            <person name="Harris M."/>
            <person name="Harris N.L."/>
            <person name="Harvey D.A."/>
            <person name="Heiman T.J."/>
            <person name="Hernandez J.R."/>
            <person name="Houck J."/>
            <person name="Hostin D."/>
            <person name="Houston K.A."/>
            <person name="Howland T.J."/>
            <person name="Wei M.-H."/>
            <person name="Ibegwam C."/>
            <person name="Jalali M."/>
            <person name="Kalush F."/>
            <person name="Karpen G.H."/>
            <person name="Ke Z."/>
            <person name="Kennison J.A."/>
            <person name="Ketchum K.A."/>
            <person name="Kimmel B.E."/>
            <person name="Kodira C.D."/>
            <person name="Kraft C.L."/>
            <person name="Kravitz S."/>
            <person name="Kulp D."/>
            <person name="Lai Z."/>
            <person name="Lasko P."/>
            <person name="Lei Y."/>
            <person name="Levitsky A.A."/>
            <person name="Li J.H."/>
            <person name="Li Z."/>
            <person name="Liang Y."/>
            <person name="Lin X."/>
            <person name="Liu X."/>
            <person name="Mattei B."/>
            <person name="McIntosh T.C."/>
            <person name="McLeod M.P."/>
            <person name="McPherson D."/>
            <person name="Merkulov G."/>
            <person name="Milshina N.V."/>
            <person name="Mobarry C."/>
            <person name="Morris J."/>
            <person name="Moshrefi A."/>
            <person name="Mount S.M."/>
            <person name="Moy M."/>
            <person name="Murphy B."/>
            <person name="Murphy L."/>
            <person name="Muzny D.M."/>
            <person name="Nelson D.L."/>
            <person name="Nelson D.R."/>
            <person name="Nelson K.A."/>
            <person name="Nixon K."/>
            <person name="Nusskern D.R."/>
            <person name="Pacleb J.M."/>
            <person name="Palazzolo M."/>
            <person name="Pittman G.S."/>
            <person name="Pan S."/>
            <person name="Pollard J."/>
            <person name="Puri V."/>
            <person name="Reese M.G."/>
            <person name="Reinert K."/>
            <person name="Remington K."/>
            <person name="Saunders R.D.C."/>
            <person name="Scheeler F."/>
            <person name="Shen H."/>
            <person name="Shue B.C."/>
            <person name="Siden-Kiamos I."/>
            <person name="Simpson M."/>
            <person name="Skupski M.P."/>
            <person name="Smith T.J."/>
            <person name="Spier E."/>
            <person name="Spradling A.C."/>
            <person name="Stapleton M."/>
            <person name="Strong R."/>
            <person name="Sun E."/>
            <person name="Svirskas R."/>
            <person name="Tector C."/>
            <person name="Turner R."/>
            <person name="Venter E."/>
            <person name="Wang A.H."/>
            <person name="Wang X."/>
            <person name="Wang Z.-Y."/>
            <person name="Wassarman D.A."/>
            <person name="Weinstock G.M."/>
            <person name="Weissenbach J."/>
            <person name="Williams S.M."/>
            <person name="Woodage T."/>
            <person name="Worley K.C."/>
            <person name="Wu D."/>
            <person name="Yang S."/>
            <person name="Yao Q.A."/>
            <person name="Ye J."/>
            <person name="Yeh R.-F."/>
            <person name="Zaveri J.S."/>
            <person name="Zhan M."/>
            <person name="Zhang G."/>
            <person name="Zhao Q."/>
            <person name="Zheng L."/>
            <person name="Zheng X.H."/>
            <person name="Zhong F.N."/>
            <person name="Zhong W."/>
            <person name="Zhou X."/>
            <person name="Zhu S.C."/>
            <person name="Zhu X."/>
            <person name="Smith H.O."/>
            <person name="Gibbs R.A."/>
            <person name="Myers E.W."/>
            <person name="Rubin G.M."/>
            <person name="Venter J.C."/>
        </authorList>
    </citation>
    <scope>NUCLEOTIDE SEQUENCE [LARGE SCALE GENOMIC DNA]</scope>
    <source>
        <strain>Berkeley</strain>
    </source>
</reference>
<reference key="2">
    <citation type="journal article" date="2002" name="Genome Biol.">
        <title>Annotation of the Drosophila melanogaster euchromatic genome: a systematic review.</title>
        <authorList>
            <person name="Misra S."/>
            <person name="Crosby M.A."/>
            <person name="Mungall C.J."/>
            <person name="Matthews B.B."/>
            <person name="Campbell K.S."/>
            <person name="Hradecky P."/>
            <person name="Huang Y."/>
            <person name="Kaminker J.S."/>
            <person name="Millburn G.H."/>
            <person name="Prochnik S.E."/>
            <person name="Smith C.D."/>
            <person name="Tupy J.L."/>
            <person name="Whitfield E.J."/>
            <person name="Bayraktaroglu L."/>
            <person name="Berman B.P."/>
            <person name="Bettencourt B.R."/>
            <person name="Celniker S.E."/>
            <person name="de Grey A.D.N.J."/>
            <person name="Drysdale R.A."/>
            <person name="Harris N.L."/>
            <person name="Richter J."/>
            <person name="Russo S."/>
            <person name="Schroeder A.J."/>
            <person name="Shu S.Q."/>
            <person name="Stapleton M."/>
            <person name="Yamada C."/>
            <person name="Ashburner M."/>
            <person name="Gelbart W.M."/>
            <person name="Rubin G.M."/>
            <person name="Lewis S.E."/>
        </authorList>
    </citation>
    <scope>GENOME REANNOTATION</scope>
    <source>
        <strain>Berkeley</strain>
    </source>
</reference>
<reference key="3">
    <citation type="unpublished observations" date="2000-09">
        <authorList>
            <person name="Nelson B."/>
        </authorList>
    </citation>
    <scope>CONCEPTUAL TRANSLATION</scope>
</reference>
<sequence>MWIIFLIIGLLVLGLLVLLIIAARYQRDYWRYLDIPHERPKKLWPIIRQIMTQTLSTEAMKAEHYSAIYKKFKGSGPFCGFYALLQPRALILDRELIRQIMIKDFWNFNDRGLYCNQKSDPLSGDLYALRGESWKEMRQKLDPSLEGDRMSLLYDCLYEEAEQLLLTVNSTLMSQPHSTVHIQKIMRRYVLSSLAKCVFGLNAEQRKTYPLEDFEQMTELALNSHKHGYLMNLMMIRFPNFCRMLRMRRTPKQAEEYFIKLLTSIVEQRETSGKPQKDYLQLLIDVKALEFITYQYEADKELGAHLQNELAAHADVFLKAGYEQTANTLSYVLYELALHPELQVRVREEVKKAIERHDGHITHEGIKSLSFMGQVINETLRMHPITPYILRRTLNDYAVPDHPKYILVKELFLIIPTHAIHHDPDIYPDPEEFKPDRWSGPRDSLQEQGTWFGFGVGARSCIGIQFAQLQLRLALALLLSEYEFSLNTRKPLINLEDGIALTLMPLGVIEPGNEERAV</sequence>
<feature type="chain" id="PRO_0000052330" description="Probable cytochrome P450 317a1">
    <location>
        <begin position="1"/>
        <end position="518"/>
    </location>
</feature>
<feature type="binding site" description="axial binding residue" evidence="1">
    <location>
        <position position="461"/>
    </location>
    <ligand>
        <name>heme</name>
        <dbReference type="ChEBI" id="CHEBI:30413"/>
    </ligand>
    <ligandPart>
        <name>Fe</name>
        <dbReference type="ChEBI" id="CHEBI:18248"/>
    </ligandPart>
</feature>
<evidence type="ECO:0000250" key="1"/>
<evidence type="ECO:0000305" key="2"/>
<gene>
    <name type="primary">Cyp317a1</name>
    <name type="ORF">CG17453</name>
</gene>
<proteinExistence type="inferred from homology"/>
<keyword id="KW-0256">Endoplasmic reticulum</keyword>
<keyword id="KW-0349">Heme</keyword>
<keyword id="KW-0408">Iron</keyword>
<keyword id="KW-0472">Membrane</keyword>
<keyword id="KW-0479">Metal-binding</keyword>
<keyword id="KW-0492">Microsome</keyword>
<keyword id="KW-0503">Monooxygenase</keyword>
<keyword id="KW-0560">Oxidoreductase</keyword>
<keyword id="KW-1185">Reference proteome</keyword>
<name>CP317_DROME</name>
<comment type="function">
    <text evidence="1">May be involved in the metabolism of insect hormones and in the breakdown of synthetic insecticides.</text>
</comment>
<comment type="cofactor">
    <cofactor evidence="1">
        <name>heme</name>
        <dbReference type="ChEBI" id="CHEBI:30413"/>
    </cofactor>
</comment>
<comment type="subcellular location">
    <subcellularLocation>
        <location evidence="2">Endoplasmic reticulum membrane</location>
        <topology evidence="2">Peripheral membrane protein</topology>
    </subcellularLocation>
    <subcellularLocation>
        <location evidence="2">Microsome membrane</location>
        <topology evidence="2">Peripheral membrane protein</topology>
    </subcellularLocation>
</comment>
<comment type="similarity">
    <text evidence="2">Belongs to the cytochrome P450 family.</text>
</comment>
<comment type="sequence caution" evidence="2">
    <conflict type="erroneous gene model prediction">
        <sequence resource="EMBL-CDS" id="AAF58184"/>
    </conflict>
</comment>
<dbReference type="EC" id="1.14.-.-"/>
<dbReference type="EMBL" id="AE013599">
    <property type="protein sequence ID" value="AAF58184.1"/>
    <property type="status" value="ALT_SEQ"/>
    <property type="molecule type" value="Genomic_DNA"/>
</dbReference>
<dbReference type="RefSeq" id="NP_001286435.1">
    <property type="nucleotide sequence ID" value="NM_001299506.1"/>
</dbReference>
<dbReference type="RefSeq" id="NP_001286436.1">
    <property type="nucleotide sequence ID" value="NM_001299507.1"/>
</dbReference>
<dbReference type="RefSeq" id="NP_611004.1">
    <property type="nucleotide sequence ID" value="NM_137160.2"/>
</dbReference>
<dbReference type="SMR" id="Q9V776"/>
<dbReference type="FunCoup" id="Q9V776">
    <property type="interactions" value="3"/>
</dbReference>
<dbReference type="STRING" id="7227.FBpp0311812"/>
<dbReference type="PaxDb" id="7227-FBpp0086536"/>
<dbReference type="DNASU" id="36667"/>
<dbReference type="GeneID" id="36667"/>
<dbReference type="KEGG" id="dme:Dmel_CG17453"/>
<dbReference type="UCSC" id="CG17453-RA">
    <property type="organism name" value="d. melanogaster"/>
</dbReference>
<dbReference type="AGR" id="FB:FBgn0033982"/>
<dbReference type="CTD" id="36667"/>
<dbReference type="FlyBase" id="FBgn0033982">
    <property type="gene designation" value="Cyp317a1"/>
</dbReference>
<dbReference type="VEuPathDB" id="VectorBase:FBgn0033982"/>
<dbReference type="eggNOG" id="KOG0158">
    <property type="taxonomic scope" value="Eukaryota"/>
</dbReference>
<dbReference type="HOGENOM" id="CLU_001570_5_2_1"/>
<dbReference type="InParanoid" id="Q9V776"/>
<dbReference type="OrthoDB" id="1470350at2759"/>
<dbReference type="PhylomeDB" id="Q9V776"/>
<dbReference type="BioGRID-ORCS" id="36667">
    <property type="hits" value="0 hits in 1 CRISPR screen"/>
</dbReference>
<dbReference type="GenomeRNAi" id="36667"/>
<dbReference type="PRO" id="PR:Q9V776"/>
<dbReference type="Proteomes" id="UP000000803">
    <property type="component" value="Chromosome 2R"/>
</dbReference>
<dbReference type="ExpressionAtlas" id="Q9V776">
    <property type="expression patterns" value="baseline and differential"/>
</dbReference>
<dbReference type="GO" id="GO:0005789">
    <property type="term" value="C:endoplasmic reticulum membrane"/>
    <property type="evidence" value="ECO:0007669"/>
    <property type="project" value="UniProtKB-SubCell"/>
</dbReference>
<dbReference type="GO" id="GO:0020037">
    <property type="term" value="F:heme binding"/>
    <property type="evidence" value="ECO:0007669"/>
    <property type="project" value="InterPro"/>
</dbReference>
<dbReference type="GO" id="GO:0005506">
    <property type="term" value="F:iron ion binding"/>
    <property type="evidence" value="ECO:0007669"/>
    <property type="project" value="InterPro"/>
</dbReference>
<dbReference type="GO" id="GO:0004497">
    <property type="term" value="F:monooxygenase activity"/>
    <property type="evidence" value="ECO:0007669"/>
    <property type="project" value="UniProtKB-KW"/>
</dbReference>
<dbReference type="GO" id="GO:0016705">
    <property type="term" value="F:oxidoreductase activity, acting on paired donors, with incorporation or reduction of molecular oxygen"/>
    <property type="evidence" value="ECO:0007669"/>
    <property type="project" value="InterPro"/>
</dbReference>
<dbReference type="CDD" id="cd11056">
    <property type="entry name" value="CYP6-like"/>
    <property type="match status" value="1"/>
</dbReference>
<dbReference type="Gene3D" id="1.10.630.10">
    <property type="entry name" value="Cytochrome P450"/>
    <property type="match status" value="1"/>
</dbReference>
<dbReference type="InterPro" id="IPR001128">
    <property type="entry name" value="Cyt_P450"/>
</dbReference>
<dbReference type="InterPro" id="IPR017972">
    <property type="entry name" value="Cyt_P450_CS"/>
</dbReference>
<dbReference type="InterPro" id="IPR002401">
    <property type="entry name" value="Cyt_P450_E_grp-I"/>
</dbReference>
<dbReference type="InterPro" id="IPR036396">
    <property type="entry name" value="Cyt_P450_sf"/>
</dbReference>
<dbReference type="InterPro" id="IPR050476">
    <property type="entry name" value="Insect_CytP450_Detox"/>
</dbReference>
<dbReference type="PANTHER" id="PTHR24292">
    <property type="entry name" value="CYTOCHROME P450"/>
    <property type="match status" value="1"/>
</dbReference>
<dbReference type="PANTHER" id="PTHR24292:SF100">
    <property type="entry name" value="CYTOCHROME P450 6A16, ISOFORM B-RELATED"/>
    <property type="match status" value="1"/>
</dbReference>
<dbReference type="Pfam" id="PF00067">
    <property type="entry name" value="p450"/>
    <property type="match status" value="1"/>
</dbReference>
<dbReference type="PRINTS" id="PR00463">
    <property type="entry name" value="EP450I"/>
</dbReference>
<dbReference type="PRINTS" id="PR00385">
    <property type="entry name" value="P450"/>
</dbReference>
<dbReference type="SUPFAM" id="SSF48264">
    <property type="entry name" value="Cytochrome P450"/>
    <property type="match status" value="1"/>
</dbReference>
<dbReference type="PROSITE" id="PS00086">
    <property type="entry name" value="CYTOCHROME_P450"/>
    <property type="match status" value="1"/>
</dbReference>
<accession>Q9V776</accession>
<protein>
    <recommendedName>
        <fullName>Probable cytochrome P450 317a1</fullName>
        <ecNumber>1.14.-.-</ecNumber>
    </recommendedName>
    <alternativeName>
        <fullName>CYPCCCXVIIA1</fullName>
    </alternativeName>
</protein>
<organism>
    <name type="scientific">Drosophila melanogaster</name>
    <name type="common">Fruit fly</name>
    <dbReference type="NCBI Taxonomy" id="7227"/>
    <lineage>
        <taxon>Eukaryota</taxon>
        <taxon>Metazoa</taxon>
        <taxon>Ecdysozoa</taxon>
        <taxon>Arthropoda</taxon>
        <taxon>Hexapoda</taxon>
        <taxon>Insecta</taxon>
        <taxon>Pterygota</taxon>
        <taxon>Neoptera</taxon>
        <taxon>Endopterygota</taxon>
        <taxon>Diptera</taxon>
        <taxon>Brachycera</taxon>
        <taxon>Muscomorpha</taxon>
        <taxon>Ephydroidea</taxon>
        <taxon>Drosophilidae</taxon>
        <taxon>Drosophila</taxon>
        <taxon>Sophophora</taxon>
    </lineage>
</organism>